<proteinExistence type="inferred from homology"/>
<feature type="chain" id="PRO_0000076333" description="SWR1-complex protein 3">
    <location>
        <begin position="1"/>
        <end position="659"/>
    </location>
</feature>
<feature type="region of interest" description="Disordered" evidence="3">
    <location>
        <begin position="28"/>
        <end position="68"/>
    </location>
</feature>
<feature type="region of interest" description="Disordered" evidence="3">
    <location>
        <begin position="203"/>
        <end position="309"/>
    </location>
</feature>
<feature type="region of interest" description="Disordered" evidence="3">
    <location>
        <begin position="341"/>
        <end position="470"/>
    </location>
</feature>
<feature type="coiled-coil region" evidence="2">
    <location>
        <begin position="191"/>
        <end position="286"/>
    </location>
</feature>
<feature type="compositionally biased region" description="Basic residues" evidence="3">
    <location>
        <begin position="33"/>
        <end position="43"/>
    </location>
</feature>
<feature type="compositionally biased region" description="Basic and acidic residues" evidence="3">
    <location>
        <begin position="44"/>
        <end position="54"/>
    </location>
</feature>
<feature type="compositionally biased region" description="Basic and acidic residues" evidence="3">
    <location>
        <begin position="203"/>
        <end position="299"/>
    </location>
</feature>
<feature type="compositionally biased region" description="Pro residues" evidence="3">
    <location>
        <begin position="346"/>
        <end position="355"/>
    </location>
</feature>
<feature type="compositionally biased region" description="Polar residues" evidence="3">
    <location>
        <begin position="360"/>
        <end position="375"/>
    </location>
</feature>
<feature type="compositionally biased region" description="Basic and acidic residues" evidence="3">
    <location>
        <begin position="376"/>
        <end position="421"/>
    </location>
</feature>
<feature type="compositionally biased region" description="Polar residues" evidence="3">
    <location>
        <begin position="422"/>
        <end position="431"/>
    </location>
</feature>
<feature type="compositionally biased region" description="Basic and acidic residues" evidence="3">
    <location>
        <begin position="432"/>
        <end position="452"/>
    </location>
</feature>
<gene>
    <name type="primary">SWC3</name>
    <name type="ordered locus">CAGL0H06391g</name>
</gene>
<comment type="function">
    <text evidence="1">Component of the SWR1 complex which mediates the ATP-dependent exchange of histone H2A for the H2A variant HZT1 leading to transcriptional regulation of selected genes by chromatin remodeling. Involved in chromosome stability (By similarity).</text>
</comment>
<comment type="subunit">
    <text evidence="1">Component of the SWR1 chromatin remodeling complex.</text>
</comment>
<comment type="subcellular location">
    <subcellularLocation>
        <location evidence="1">Nucleus</location>
    </subcellularLocation>
</comment>
<comment type="similarity">
    <text evidence="4">Belongs to the SWC3 family.</text>
</comment>
<accession>Q6FRS1</accession>
<name>SWC3_CANGA</name>
<organism>
    <name type="scientific">Candida glabrata (strain ATCC 2001 / BCRC 20586 / JCM 3761 / NBRC 0622 / NRRL Y-65 / CBS 138)</name>
    <name type="common">Yeast</name>
    <name type="synonym">Nakaseomyces glabratus</name>
    <dbReference type="NCBI Taxonomy" id="284593"/>
    <lineage>
        <taxon>Eukaryota</taxon>
        <taxon>Fungi</taxon>
        <taxon>Dikarya</taxon>
        <taxon>Ascomycota</taxon>
        <taxon>Saccharomycotina</taxon>
        <taxon>Saccharomycetes</taxon>
        <taxon>Saccharomycetales</taxon>
        <taxon>Saccharomycetaceae</taxon>
        <taxon>Nakaseomyces</taxon>
    </lineage>
</organism>
<dbReference type="EMBL" id="CR380954">
    <property type="protein sequence ID" value="CAG60006.1"/>
    <property type="molecule type" value="Genomic_DNA"/>
</dbReference>
<dbReference type="RefSeq" id="XP_447073.1">
    <property type="nucleotide sequence ID" value="XM_447073.1"/>
</dbReference>
<dbReference type="SMR" id="Q6FRS1"/>
<dbReference type="FunCoup" id="Q6FRS1">
    <property type="interactions" value="152"/>
</dbReference>
<dbReference type="STRING" id="284593.Q6FRS1"/>
<dbReference type="EnsemblFungi" id="CAGL0H06391g-T">
    <property type="protein sequence ID" value="CAGL0H06391g-T-p1"/>
    <property type="gene ID" value="CAGL0H06391g"/>
</dbReference>
<dbReference type="KEGG" id="cgr:2888819"/>
<dbReference type="CGD" id="CAL0131456">
    <property type="gene designation" value="CAGL0H06391g"/>
</dbReference>
<dbReference type="VEuPathDB" id="FungiDB:CAGL0H06391g"/>
<dbReference type="eggNOG" id="ENOG502QWM7">
    <property type="taxonomic scope" value="Eukaryota"/>
</dbReference>
<dbReference type="HOGENOM" id="CLU_008595_1_0_1"/>
<dbReference type="InParanoid" id="Q6FRS1"/>
<dbReference type="OMA" id="MQKMCDC"/>
<dbReference type="Proteomes" id="UP000002428">
    <property type="component" value="Chromosome H"/>
</dbReference>
<dbReference type="GO" id="GO:0000812">
    <property type="term" value="C:Swr1 complex"/>
    <property type="evidence" value="ECO:0007669"/>
    <property type="project" value="EnsemblFungi"/>
</dbReference>
<dbReference type="GO" id="GO:0140849">
    <property type="term" value="F:ATP-dependent H2AZ histone chaperone activity"/>
    <property type="evidence" value="ECO:0007669"/>
    <property type="project" value="InterPro"/>
</dbReference>
<dbReference type="GO" id="GO:0007029">
    <property type="term" value="P:endoplasmic reticulum organization"/>
    <property type="evidence" value="ECO:0007669"/>
    <property type="project" value="EnsemblFungi"/>
</dbReference>
<dbReference type="InterPro" id="IPR037651">
    <property type="entry name" value="Swc3"/>
</dbReference>
<dbReference type="PANTHER" id="PTHR28108">
    <property type="entry name" value="SWR1-COMPLEX PROTEIN 3"/>
    <property type="match status" value="1"/>
</dbReference>
<dbReference type="PANTHER" id="PTHR28108:SF1">
    <property type="entry name" value="SWR1-COMPLEX PROTEIN 3"/>
    <property type="match status" value="1"/>
</dbReference>
<dbReference type="Pfam" id="PF24707">
    <property type="entry name" value="Swc3"/>
    <property type="match status" value="1"/>
</dbReference>
<evidence type="ECO:0000250" key="1"/>
<evidence type="ECO:0000255" key="2"/>
<evidence type="ECO:0000256" key="3">
    <source>
        <dbReference type="SAM" id="MobiDB-lite"/>
    </source>
</evidence>
<evidence type="ECO:0000305" key="4"/>
<keyword id="KW-0010">Activator</keyword>
<keyword id="KW-0156">Chromatin regulator</keyword>
<keyword id="KW-0175">Coiled coil</keyword>
<keyword id="KW-0539">Nucleus</keyword>
<keyword id="KW-1185">Reference proteome</keyword>
<keyword id="KW-0804">Transcription</keyword>
<keyword id="KW-0805">Transcription regulation</keyword>
<protein>
    <recommendedName>
        <fullName>SWR1-complex protein 3</fullName>
    </recommendedName>
</protein>
<reference key="1">
    <citation type="journal article" date="2004" name="Nature">
        <title>Genome evolution in yeasts.</title>
        <authorList>
            <person name="Dujon B."/>
            <person name="Sherman D."/>
            <person name="Fischer G."/>
            <person name="Durrens P."/>
            <person name="Casaregola S."/>
            <person name="Lafontaine I."/>
            <person name="de Montigny J."/>
            <person name="Marck C."/>
            <person name="Neuveglise C."/>
            <person name="Talla E."/>
            <person name="Goffard N."/>
            <person name="Frangeul L."/>
            <person name="Aigle M."/>
            <person name="Anthouard V."/>
            <person name="Babour A."/>
            <person name="Barbe V."/>
            <person name="Barnay S."/>
            <person name="Blanchin S."/>
            <person name="Beckerich J.-M."/>
            <person name="Beyne E."/>
            <person name="Bleykasten C."/>
            <person name="Boisrame A."/>
            <person name="Boyer J."/>
            <person name="Cattolico L."/>
            <person name="Confanioleri F."/>
            <person name="de Daruvar A."/>
            <person name="Despons L."/>
            <person name="Fabre E."/>
            <person name="Fairhead C."/>
            <person name="Ferry-Dumazet H."/>
            <person name="Groppi A."/>
            <person name="Hantraye F."/>
            <person name="Hennequin C."/>
            <person name="Jauniaux N."/>
            <person name="Joyet P."/>
            <person name="Kachouri R."/>
            <person name="Kerrest A."/>
            <person name="Koszul R."/>
            <person name="Lemaire M."/>
            <person name="Lesur I."/>
            <person name="Ma L."/>
            <person name="Muller H."/>
            <person name="Nicaud J.-M."/>
            <person name="Nikolski M."/>
            <person name="Oztas S."/>
            <person name="Ozier-Kalogeropoulos O."/>
            <person name="Pellenz S."/>
            <person name="Potier S."/>
            <person name="Richard G.-F."/>
            <person name="Straub M.-L."/>
            <person name="Suleau A."/>
            <person name="Swennen D."/>
            <person name="Tekaia F."/>
            <person name="Wesolowski-Louvel M."/>
            <person name="Westhof E."/>
            <person name="Wirth B."/>
            <person name="Zeniou-Meyer M."/>
            <person name="Zivanovic Y."/>
            <person name="Bolotin-Fukuhara M."/>
            <person name="Thierry A."/>
            <person name="Bouchier C."/>
            <person name="Caudron B."/>
            <person name="Scarpelli C."/>
            <person name="Gaillardin C."/>
            <person name="Weissenbach J."/>
            <person name="Wincker P."/>
            <person name="Souciet J.-L."/>
        </authorList>
    </citation>
    <scope>NUCLEOTIDE SEQUENCE [LARGE SCALE GENOMIC DNA]</scope>
    <source>
        <strain>ATCC 2001 / BCRC 20586 / JCM 3761 / NBRC 0622 / NRRL Y-65 / CBS 138</strain>
    </source>
</reference>
<sequence length="659" mass="76311">MAVALRARNAVKVEDGIDTSNIIEEVDDNTKGTRSRASRRRRRRGDEEEKHSEEETYNEFNDDGTLKTEGTLQTGNGSGRPFELVAGLPCSLDVPQYNSALTFPLSVRDSGVLYSSLLSSRRTWISGEMFEVYWTRANKVPSLAIKDESIIKELESSKEQDASGKDRMQRMCDCELMAGPHTFSIKLFIVKDDEKEKKWQEEQEYKKKEKEEQKKLESEQRKKRAEEKKQMLQLKKQEREKQMQLQKEARARAKKEQAEARQRQKEEERQRKLMNKERVKEQKASTSKPKKDQNKKNSDQHMIANLNIMAQRDPELKKLMAKVANGQANMQEIEEFKRVIELAKNLPPPGTPPAKPEVQKAQSKPTDSNETSADSSKSEILQESKTNESDKKATAEQATEPKTHSEENKPESENQSRDNSEKSASSHNQEASIKKEADANSVIKKESSDGDGNKSQQPKRKYNKAPKVADELTEKEKEMQLTAFQQKYVTGAELVLEFAENTNFRFLLPKKAIIQYIPESNRYKMSWLQIHNQSDITRFYKRQVKELTRRIHNAEEKQRVTDEYNVFRDKKCPSPLFSSMTVTFSGIHVKFNSIMMNSFDPKEEVRGYMEDVLAVGTRLSGYNLWYQLDGYDDRELAERLRSELNEYEQSLKPKRQKKQ</sequence>